<sequence length="681" mass="77348">MSPAPMPVTTAEQDRDVVVIDAVVEEVRPPRLPKSHLEDLGPVSDMFPESWEYHPDLIMEFYRKRPLQVLGRLINILFPLLRFILGIWWEKLRGKDPTVSRAKAIQLRELLTNLGPTYIKVGQALSTRPDLVPPVFLDELTTLQDQLPSFPNEVAYRFIEEELGAPAEEIYAELSPEPIAAASLGQVYKGKLKTGEAVAVKVQRPDLVRRITLDIYIMRSLSLWARRSVKRLRSDLVAITDELASRVFEEMNYYQEAINGEKFAQLYGSLPEIYVPSIYWQYTGRRVLTMEWVEGIKLTNIKAIQAQGIDATHLVEVGVQCSLRQLLEHGFFHADPHPGNLLAMADGRLAYLDFGMMSTIQPYQRYGLIEAVVHLVNRDFDSLAKDYVKLDFLKPDTDLKPIIPALGQVFGNALGASVAELNFKSITDQMSAMMYEFPFRVPAYYALIIRSMVTLEGIAIGIDPNFKVLSKAYPYIAKRLLTDQSEELRTSLKELLFKEGSFRWNRLENLLRNAKNSPGFDFDYVLNEATEFLLSDRGQFIRDRLVAELVNSIDQLGRNTWQQVSHNIQERISFLGDLGNGNGKAHQTKTIKVVPQPAIAQQEETWQHLQNLWQILKETPGFDPLKFVPVLSQIIVNPTSRRMGQQVAEGLLQKAIARVIRQWALALESQPNPAIKIRNAA</sequence>
<protein>
    <recommendedName>
        <fullName>Uncharacterized protein sll0005</fullName>
    </recommendedName>
</protein>
<gene>
    <name type="ordered locus">sll0005</name>
</gene>
<comment type="similarity">
    <text evidence="1">Belongs to the protein kinase superfamily. ADCK protein kinase family.</text>
</comment>
<accession>Q55680</accession>
<proteinExistence type="inferred from homology"/>
<keyword id="KW-1185">Reference proteome</keyword>
<dbReference type="EMBL" id="BA000022">
    <property type="protein sequence ID" value="BAA10206.1"/>
    <property type="molecule type" value="Genomic_DNA"/>
</dbReference>
<dbReference type="PIR" id="S76354">
    <property type="entry name" value="S76354"/>
</dbReference>
<dbReference type="SMR" id="Q55680"/>
<dbReference type="IntAct" id="Q55680">
    <property type="interactions" value="5"/>
</dbReference>
<dbReference type="STRING" id="1148.gene:10499704"/>
<dbReference type="PaxDb" id="1148-1001579"/>
<dbReference type="EnsemblBacteria" id="BAA10206">
    <property type="protein sequence ID" value="BAA10206"/>
    <property type="gene ID" value="BAA10206"/>
</dbReference>
<dbReference type="KEGG" id="syn:sll0005"/>
<dbReference type="eggNOG" id="COG0661">
    <property type="taxonomic scope" value="Bacteria"/>
</dbReference>
<dbReference type="InParanoid" id="Q55680"/>
<dbReference type="PhylomeDB" id="Q55680"/>
<dbReference type="Proteomes" id="UP000001425">
    <property type="component" value="Chromosome"/>
</dbReference>
<dbReference type="GO" id="GO:0005524">
    <property type="term" value="F:ATP binding"/>
    <property type="evidence" value="ECO:0007669"/>
    <property type="project" value="InterPro"/>
</dbReference>
<dbReference type="GO" id="GO:0004672">
    <property type="term" value="F:protein kinase activity"/>
    <property type="evidence" value="ECO:0007669"/>
    <property type="project" value="InterPro"/>
</dbReference>
<dbReference type="CDD" id="cd05121">
    <property type="entry name" value="ABC1_ADCK3-like"/>
    <property type="match status" value="1"/>
</dbReference>
<dbReference type="Gene3D" id="1.10.510.10">
    <property type="entry name" value="Transferase(Phosphotransferase) domain 1"/>
    <property type="match status" value="1"/>
</dbReference>
<dbReference type="InterPro" id="IPR004147">
    <property type="entry name" value="ABC1_dom"/>
</dbReference>
<dbReference type="InterPro" id="IPR011009">
    <property type="entry name" value="Kinase-like_dom_sf"/>
</dbReference>
<dbReference type="InterPro" id="IPR000719">
    <property type="entry name" value="Prot_kinase_dom"/>
</dbReference>
<dbReference type="InterPro" id="IPR050154">
    <property type="entry name" value="UbiB_kinase"/>
</dbReference>
<dbReference type="PANTHER" id="PTHR10566">
    <property type="entry name" value="CHAPERONE-ACTIVITY OF BC1 COMPLEX CABC1 -RELATED"/>
    <property type="match status" value="1"/>
</dbReference>
<dbReference type="PANTHER" id="PTHR10566:SF128">
    <property type="entry name" value="UBIB DOMAIN CONTAINING KINASE"/>
    <property type="match status" value="1"/>
</dbReference>
<dbReference type="Pfam" id="PF03109">
    <property type="entry name" value="ABC1"/>
    <property type="match status" value="1"/>
</dbReference>
<dbReference type="SUPFAM" id="SSF56112">
    <property type="entry name" value="Protein kinase-like (PK-like)"/>
    <property type="match status" value="1"/>
</dbReference>
<name>Y005_SYNY3</name>
<feature type="chain" id="PRO_0000200730" description="Uncharacterized protein sll0005">
    <location>
        <begin position="1"/>
        <end position="681"/>
    </location>
</feature>
<evidence type="ECO:0000305" key="1"/>
<organism>
    <name type="scientific">Synechocystis sp. (strain ATCC 27184 / PCC 6803 / Kazusa)</name>
    <dbReference type="NCBI Taxonomy" id="1111708"/>
    <lineage>
        <taxon>Bacteria</taxon>
        <taxon>Bacillati</taxon>
        <taxon>Cyanobacteriota</taxon>
        <taxon>Cyanophyceae</taxon>
        <taxon>Synechococcales</taxon>
        <taxon>Merismopediaceae</taxon>
        <taxon>Synechocystis</taxon>
    </lineage>
</organism>
<reference key="1">
    <citation type="journal article" date="1995" name="DNA Res.">
        <title>Sequence analysis of the genome of the unicellular cyanobacterium Synechocystis sp. strain PCC6803. I. Sequence features in the 1 Mb region from map positions 64% to 92% of the genome.</title>
        <authorList>
            <person name="Kaneko T."/>
            <person name="Tanaka A."/>
            <person name="Sato S."/>
            <person name="Kotani H."/>
            <person name="Sazuka T."/>
            <person name="Miyajima N."/>
            <person name="Sugiura M."/>
            <person name="Tabata S."/>
        </authorList>
    </citation>
    <scope>NUCLEOTIDE SEQUENCE [LARGE SCALE GENOMIC DNA]</scope>
    <source>
        <strain>ATCC 27184 / PCC 6803 / N-1</strain>
    </source>
</reference>
<reference key="2">
    <citation type="journal article" date="1996" name="DNA Res.">
        <title>Sequence analysis of the genome of the unicellular cyanobacterium Synechocystis sp. strain PCC6803. II. Sequence determination of the entire genome and assignment of potential protein-coding regions.</title>
        <authorList>
            <person name="Kaneko T."/>
            <person name="Sato S."/>
            <person name="Kotani H."/>
            <person name="Tanaka A."/>
            <person name="Asamizu E."/>
            <person name="Nakamura Y."/>
            <person name="Miyajima N."/>
            <person name="Hirosawa M."/>
            <person name="Sugiura M."/>
            <person name="Sasamoto S."/>
            <person name="Kimura T."/>
            <person name="Hosouchi T."/>
            <person name="Matsuno A."/>
            <person name="Muraki A."/>
            <person name="Nakazaki N."/>
            <person name="Naruo K."/>
            <person name="Okumura S."/>
            <person name="Shimpo S."/>
            <person name="Takeuchi C."/>
            <person name="Wada T."/>
            <person name="Watanabe A."/>
            <person name="Yamada M."/>
            <person name="Yasuda M."/>
            <person name="Tabata S."/>
        </authorList>
    </citation>
    <scope>NUCLEOTIDE SEQUENCE [LARGE SCALE GENOMIC DNA]</scope>
    <source>
        <strain>ATCC 27184 / PCC 6803 / Kazusa</strain>
    </source>
</reference>